<dbReference type="EMBL" id="CP001790">
    <property type="protein sequence ID" value="ACX89525.1"/>
    <property type="molecule type" value="Genomic_DNA"/>
</dbReference>
<dbReference type="RefSeq" id="WP_014701434.1">
    <property type="nucleotide sequence ID" value="NC_013421.1"/>
</dbReference>
<dbReference type="GeneID" id="45852238"/>
<dbReference type="KEGG" id="pwa:Pecwa_3790"/>
<dbReference type="eggNOG" id="ENOG502ZRFS">
    <property type="taxonomic scope" value="Bacteria"/>
</dbReference>
<dbReference type="HOGENOM" id="CLU_126493_0_0_6"/>
<dbReference type="GO" id="GO:0005886">
    <property type="term" value="C:plasma membrane"/>
    <property type="evidence" value="ECO:0007669"/>
    <property type="project" value="UniProtKB-SubCell"/>
</dbReference>
<dbReference type="GO" id="GO:0034639">
    <property type="term" value="F:L-amino acid efflux transmembrane transporter activity"/>
    <property type="evidence" value="ECO:0007669"/>
    <property type="project" value="UniProtKB-UniRule"/>
</dbReference>
<dbReference type="GO" id="GO:0032973">
    <property type="term" value="P:amino acid export across plasma membrane"/>
    <property type="evidence" value="ECO:0007669"/>
    <property type="project" value="UniProtKB-UniRule"/>
</dbReference>
<dbReference type="HAMAP" id="MF_00914">
    <property type="entry name" value="L_Ala_exporter"/>
    <property type="match status" value="1"/>
</dbReference>
<dbReference type="InterPro" id="IPR010574">
    <property type="entry name" value="Ala_export_AlaE"/>
</dbReference>
<dbReference type="Pfam" id="PF06610">
    <property type="entry name" value="AlaE"/>
    <property type="match status" value="1"/>
</dbReference>
<reference key="1">
    <citation type="submission" date="2009-10" db="EMBL/GenBank/DDBJ databases">
        <title>Complete sequence of Pectobacterium wasabiae WPP163.</title>
        <authorList>
            <consortium name="US DOE Joint Genome Institute"/>
            <person name="Lucas S."/>
            <person name="Copeland A."/>
            <person name="Lapidus A."/>
            <person name="Glavina del Rio T."/>
            <person name="Tice H."/>
            <person name="Bruce D."/>
            <person name="Goodwin L."/>
            <person name="Pitluck S."/>
            <person name="Chertkov O."/>
            <person name="Brettin T."/>
            <person name="Detter J.C."/>
            <person name="Han C."/>
            <person name="Larimer F."/>
            <person name="Land M."/>
            <person name="Hauser L."/>
            <person name="Kyrpides N."/>
            <person name="Ovchinnikova G."/>
            <person name="Balakrishnan V."/>
            <person name="Glasner J."/>
            <person name="Perna N.T."/>
        </authorList>
    </citation>
    <scope>NUCLEOTIDE SEQUENCE [LARGE SCALE GENOMIC DNA]</scope>
    <source>
        <strain>WPP163</strain>
    </source>
</reference>
<proteinExistence type="inferred from homology"/>
<evidence type="ECO:0000255" key="1">
    <source>
        <dbReference type="HAMAP-Rule" id="MF_00914"/>
    </source>
</evidence>
<accession>D0KMH4</accession>
<comment type="function">
    <text evidence="1">Exports L-alanine.</text>
</comment>
<comment type="subcellular location">
    <subcellularLocation>
        <location evidence="1">Cell inner membrane</location>
        <topology evidence="1">Multi-pass membrane protein</topology>
    </subcellularLocation>
</comment>
<comment type="similarity">
    <text evidence="1">Belongs to the AlaE exporter family.</text>
</comment>
<organism>
    <name type="scientific">Pectobacterium parmentieri (strain WPP163)</name>
    <name type="common">Pectobacterium wasabiae (strain WPP163)</name>
    <dbReference type="NCBI Taxonomy" id="561231"/>
    <lineage>
        <taxon>Bacteria</taxon>
        <taxon>Pseudomonadati</taxon>
        <taxon>Pseudomonadota</taxon>
        <taxon>Gammaproteobacteria</taxon>
        <taxon>Enterobacterales</taxon>
        <taxon>Pectobacteriaceae</taxon>
        <taxon>Pectobacterium</taxon>
    </lineage>
</organism>
<gene>
    <name evidence="1" type="primary">alaE</name>
    <name type="ordered locus">Pecwa_3790</name>
</gene>
<feature type="chain" id="PRO_0000415625" description="L-alanine exporter AlaE">
    <location>
        <begin position="1"/>
        <end position="145"/>
    </location>
</feature>
<feature type="transmembrane region" description="Helical" evidence="1">
    <location>
        <begin position="16"/>
        <end position="36"/>
    </location>
</feature>
<feature type="transmembrane region" description="Helical" evidence="1">
    <location>
        <begin position="42"/>
        <end position="62"/>
    </location>
</feature>
<feature type="transmembrane region" description="Helical" evidence="1">
    <location>
        <begin position="86"/>
        <end position="106"/>
    </location>
</feature>
<feature type="transmembrane region" description="Helical" evidence="1">
    <location>
        <begin position="111"/>
        <end position="131"/>
    </location>
</feature>
<keyword id="KW-0029">Amino-acid transport</keyword>
<keyword id="KW-0997">Cell inner membrane</keyword>
<keyword id="KW-1003">Cell membrane</keyword>
<keyword id="KW-0472">Membrane</keyword>
<keyword id="KW-0812">Transmembrane</keyword>
<keyword id="KW-1133">Transmembrane helix</keyword>
<keyword id="KW-0813">Transport</keyword>
<sequence length="145" mass="16135">MFSPTSRLRSATADTFALVVYCFIIGMAIEIMLSGMSFEQSLSSRLLSIPVNIAIAWPYGLYRDRVLNMAKRHGGDHFLVRSVADLFAYVSFQSPVYAAILWVIGASSAQILTAVTSNLVISMVMGVTYGYFLEYCRRLFRVALP</sequence>
<protein>
    <recommendedName>
        <fullName evidence="1">L-alanine exporter AlaE</fullName>
    </recommendedName>
</protein>
<name>ALAE_PECPW</name>